<protein>
    <recommendedName>
        <fullName evidence="6">Cytoskeleton bundling-enhancing antitoxin CbeA</fullName>
    </recommendedName>
    <alternativeName>
        <fullName>Antitoxin CbeA</fullName>
    </alternativeName>
    <alternativeName>
        <fullName evidence="5">Antitoxin YeeU</fullName>
    </alternativeName>
</protein>
<keyword id="KW-0002">3D-structure</keyword>
<keyword id="KW-0963">Cytoplasm</keyword>
<keyword id="KW-0460">Magnesium</keyword>
<keyword id="KW-0479">Metal-binding</keyword>
<keyword id="KW-1185">Reference proteome</keyword>
<keyword id="KW-1277">Toxin-antitoxin system</keyword>
<dbReference type="EMBL" id="U00096">
    <property type="protein sequence ID" value="AAC75065.1"/>
    <property type="molecule type" value="Genomic_DNA"/>
</dbReference>
<dbReference type="EMBL" id="AP009048">
    <property type="protein sequence ID" value="BAA15827.1"/>
    <property type="molecule type" value="Genomic_DNA"/>
</dbReference>
<dbReference type="PIR" id="C64965">
    <property type="entry name" value="C64965"/>
</dbReference>
<dbReference type="RefSeq" id="NP_416508.1">
    <property type="nucleotide sequence ID" value="NC_000913.3"/>
</dbReference>
<dbReference type="RefSeq" id="WP_001285584.1">
    <property type="nucleotide sequence ID" value="NZ_LN832404.1"/>
</dbReference>
<dbReference type="PDB" id="2H28">
    <property type="method" value="X-ray"/>
    <property type="resolution" value="2.10 A"/>
    <property type="chains" value="A/B=1-122"/>
</dbReference>
<dbReference type="PDBsum" id="2H28"/>
<dbReference type="SMR" id="P76364"/>
<dbReference type="BioGRID" id="4261519">
    <property type="interactions" value="13"/>
</dbReference>
<dbReference type="BioGRID" id="850859">
    <property type="interactions" value="3"/>
</dbReference>
<dbReference type="FunCoup" id="P76364">
    <property type="interactions" value="31"/>
</dbReference>
<dbReference type="IntAct" id="P76364">
    <property type="interactions" value="6"/>
</dbReference>
<dbReference type="STRING" id="511145.b2004"/>
<dbReference type="PaxDb" id="511145-b2004"/>
<dbReference type="EnsemblBacteria" id="AAC75065">
    <property type="protein sequence ID" value="AAC75065"/>
    <property type="gene ID" value="b2004"/>
</dbReference>
<dbReference type="GeneID" id="946510"/>
<dbReference type="KEGG" id="ecj:JW1986"/>
<dbReference type="KEGG" id="eco:b2004"/>
<dbReference type="KEGG" id="ecoc:C3026_11300"/>
<dbReference type="PATRIC" id="fig|1411691.4.peg.249"/>
<dbReference type="EchoBASE" id="EB3169"/>
<dbReference type="HOGENOM" id="CLU_144696_0_0_6"/>
<dbReference type="InParanoid" id="P76364"/>
<dbReference type="OMA" id="NNDRTWW"/>
<dbReference type="OrthoDB" id="5588975at2"/>
<dbReference type="PhylomeDB" id="P76364"/>
<dbReference type="BioCyc" id="EcoCyc:G7084-MONOMER"/>
<dbReference type="EvolutionaryTrace" id="P76364"/>
<dbReference type="PRO" id="PR:P76364"/>
<dbReference type="Proteomes" id="UP000000625">
    <property type="component" value="Chromosome"/>
</dbReference>
<dbReference type="GO" id="GO:0005737">
    <property type="term" value="C:cytoplasm"/>
    <property type="evidence" value="ECO:0007669"/>
    <property type="project" value="UniProtKB-SubCell"/>
</dbReference>
<dbReference type="GO" id="GO:0008092">
    <property type="term" value="F:cytoskeletal protein binding"/>
    <property type="evidence" value="ECO:0000314"/>
    <property type="project" value="EcoCyc"/>
</dbReference>
<dbReference type="GO" id="GO:0046872">
    <property type="term" value="F:metal ion binding"/>
    <property type="evidence" value="ECO:0007669"/>
    <property type="project" value="UniProtKB-KW"/>
</dbReference>
<dbReference type="GO" id="GO:0031342">
    <property type="term" value="P:negative regulation of cell killing"/>
    <property type="evidence" value="ECO:0000269"/>
    <property type="project" value="EcoCyc"/>
</dbReference>
<dbReference type="GO" id="GO:0051495">
    <property type="term" value="P:positive regulation of cytoskeleton organization"/>
    <property type="evidence" value="ECO:0000314"/>
    <property type="project" value="EcoCyc"/>
</dbReference>
<dbReference type="Gene3D" id="3.30.450.20">
    <property type="entry name" value="PAS domain"/>
    <property type="match status" value="1"/>
</dbReference>
<dbReference type="InterPro" id="IPR009320">
    <property type="entry name" value="Antitoxin_CbeA"/>
</dbReference>
<dbReference type="InterPro" id="IPR038025">
    <property type="entry name" value="CbeA_sf"/>
</dbReference>
<dbReference type="Pfam" id="PF06154">
    <property type="entry name" value="CbeA_antitoxin"/>
    <property type="match status" value="1"/>
</dbReference>
<dbReference type="SUPFAM" id="SSF143737">
    <property type="entry name" value="YeeU-like"/>
    <property type="match status" value="1"/>
</dbReference>
<comment type="function">
    <text evidence="1 3 4">Antitoxin component of a type IV toxin-antitoxin (TA) system (PubMed:14594833, PubMed:22515815, PubMed:28257056). Antitoxin that counteracts the effect of its cognate toxin CbtA (YeeV) (PubMed:14594833, PubMed:22515815, PubMed:28257056). It does not bind to the toxin but instead binds to MreB and FtsZ (the toxin targets), enhancing their polymerization by forming higher-order bundles; it is probably retained in the MreB and FtsZ filament bundles (PubMed:22515815). The mechanism has been proposed to require intergenic DNA, in cis, between the cbeA (yeeU) and cbta (yeeV) genes (PubMed:14594833). The intergenic region was not found to be necessary in another study (PubMed:22515815). Also counteracts the morphological defects caused by overexpression of SulA and DicB on cell shape (PubMed:22515815). Also counteracts the effect of non-cognate toxins YfkI and YpjF (PubMed:28257056).</text>
</comment>
<comment type="cofactor">
    <cofactor evidence="2">
        <name>Mg(2+)</name>
        <dbReference type="ChEBI" id="CHEBI:18420"/>
    </cofactor>
    <text evidence="2">Binds 1 Mg(2+) ion per subunit.</text>
</comment>
<comment type="subunit">
    <text evidence="3 8">Homodimer (Probable). Interacts with polymerized and monomeric MreB and polymerized FtsZ (PubMed:22515815).</text>
</comment>
<comment type="interaction">
    <interactant intactId="EBI-1126877">
        <id>P76364</id>
    </interactant>
    <interactant intactId="EBI-370963">
        <id>P0A9A6</id>
        <label>ftsZ</label>
    </interactant>
    <organismsDiffer>false</organismsDiffer>
    <experiments>2</experiments>
</comment>
<comment type="interaction">
    <interactant intactId="EBI-1126877">
        <id>P76364</id>
    </interactant>
    <interactant intactId="EBI-371008">
        <id>P0A9X4</id>
        <label>mreB</label>
    </interactant>
    <organismsDiffer>false</organismsDiffer>
    <experiments>2</experiments>
</comment>
<comment type="subcellular location">
    <subcellularLocation>
        <location evidence="7">Cytoplasm</location>
    </subcellularLocation>
</comment>
<comment type="induction">
    <text evidence="4">Expressed in mid-log phase at considerably lower levels than antitoxin relB.</text>
</comment>
<comment type="disruption phenotype">
    <text evidence="4">Single deletion has no effect on expression of cognate toxin cbtA i.e. the probable operon is not autoregulatory (PubMed:28257056). Deletion of 3 type IV antitoxin genes (cbeA, yafW, yfjZ) has no effect on cell growth (PubMed:28257056).</text>
</comment>
<comment type="miscellaneous">
    <text evidence="7">Encoded in prophage CP4-44.</text>
</comment>
<comment type="similarity">
    <text evidence="7">Belongs to the CbeA/YafW/YfjZ antitoxin family.</text>
</comment>
<gene>
    <name type="primary">cbeA</name>
    <name type="synonym">yeeU</name>
    <name type="ordered locus">b2004</name>
    <name type="ordered locus">JW1986</name>
</gene>
<feature type="chain" id="PRO_0000169115" description="Cytoskeleton bundling-enhancing antitoxin CbeA">
    <location>
        <begin position="1"/>
        <end position="122"/>
    </location>
</feature>
<feature type="binding site" evidence="2">
    <location>
        <position position="86"/>
    </location>
    <ligand>
        <name>Mg(2+)</name>
        <dbReference type="ChEBI" id="CHEBI:18420"/>
    </ligand>
</feature>
<feature type="binding site" evidence="2">
    <location>
        <position position="88"/>
    </location>
    <ligand>
        <name>Mg(2+)</name>
        <dbReference type="ChEBI" id="CHEBI:18420"/>
    </ligand>
</feature>
<feature type="binding site" evidence="2">
    <location>
        <position position="102"/>
    </location>
    <ligand>
        <name>Mg(2+)</name>
        <dbReference type="ChEBI" id="CHEBI:18420"/>
    </ligand>
</feature>
<feature type="strand" evidence="9">
    <location>
        <begin position="27"/>
        <end position="37"/>
    </location>
</feature>
<feature type="strand" evidence="9">
    <location>
        <begin position="40"/>
        <end position="42"/>
    </location>
</feature>
<feature type="helix" evidence="9">
    <location>
        <begin position="45"/>
        <end position="47"/>
    </location>
</feature>
<feature type="strand" evidence="9">
    <location>
        <begin position="48"/>
        <end position="52"/>
    </location>
</feature>
<feature type="helix" evidence="9">
    <location>
        <begin position="56"/>
        <end position="79"/>
    </location>
</feature>
<feature type="strand" evidence="9">
    <location>
        <begin position="80"/>
        <end position="82"/>
    </location>
</feature>
<feature type="strand" evidence="9">
    <location>
        <begin position="90"/>
        <end position="94"/>
    </location>
</feature>
<feature type="strand" evidence="9">
    <location>
        <begin position="97"/>
        <end position="102"/>
    </location>
</feature>
<feature type="strand" evidence="9">
    <location>
        <begin position="107"/>
        <end position="116"/>
    </location>
</feature>
<proteinExistence type="evidence at protein level"/>
<accession>P76364</accession>
<accession>O07991</accession>
<accession>O07994</accession>
<evidence type="ECO:0000269" key="1">
    <source>
    </source>
</evidence>
<evidence type="ECO:0000269" key="2">
    <source>
    </source>
</evidence>
<evidence type="ECO:0000269" key="3">
    <source>
    </source>
</evidence>
<evidence type="ECO:0000269" key="4">
    <source>
    </source>
</evidence>
<evidence type="ECO:0000303" key="5">
    <source>
    </source>
</evidence>
<evidence type="ECO:0000303" key="6">
    <source>
    </source>
</evidence>
<evidence type="ECO:0000305" key="7"/>
<evidence type="ECO:0000305" key="8">
    <source>
    </source>
</evidence>
<evidence type="ECO:0007829" key="9">
    <source>
        <dbReference type="PDB" id="2H28"/>
    </source>
</evidence>
<sequence>MSDTLPGTTLPDDNHDRPWWGLPCTVTPCFGARLVQEGNRLHYLADRAGIRGLFSDADAYHLDQAFPLLMKQLELMLTSGELNPRHQHTVTLYAKGLTCKADTLSSCDYVYLAVYPTPEMKN</sequence>
<organism>
    <name type="scientific">Escherichia coli (strain K12)</name>
    <dbReference type="NCBI Taxonomy" id="83333"/>
    <lineage>
        <taxon>Bacteria</taxon>
        <taxon>Pseudomonadati</taxon>
        <taxon>Pseudomonadota</taxon>
        <taxon>Gammaproteobacteria</taxon>
        <taxon>Enterobacterales</taxon>
        <taxon>Enterobacteriaceae</taxon>
        <taxon>Escherichia</taxon>
    </lineage>
</organism>
<reference key="1">
    <citation type="journal article" date="1996" name="DNA Res.">
        <title>A 460-kb DNA sequence of the Escherichia coli K-12 genome corresponding to the 40.1-50.0 min region on the linkage map.</title>
        <authorList>
            <person name="Itoh T."/>
            <person name="Aiba H."/>
            <person name="Baba T."/>
            <person name="Fujita K."/>
            <person name="Hayashi K."/>
            <person name="Inada T."/>
            <person name="Isono K."/>
            <person name="Kasai H."/>
            <person name="Kimura S."/>
            <person name="Kitakawa M."/>
            <person name="Kitagawa M."/>
            <person name="Makino K."/>
            <person name="Miki T."/>
            <person name="Mizobuchi K."/>
            <person name="Mori H."/>
            <person name="Mori T."/>
            <person name="Motomura K."/>
            <person name="Nakade S."/>
            <person name="Nakamura Y."/>
            <person name="Nashimoto H."/>
            <person name="Nishio Y."/>
            <person name="Oshima T."/>
            <person name="Saito N."/>
            <person name="Sampei G."/>
            <person name="Seki Y."/>
            <person name="Sivasundaram S."/>
            <person name="Tagami H."/>
            <person name="Takeda J."/>
            <person name="Takemoto K."/>
            <person name="Wada C."/>
            <person name="Yamamoto Y."/>
            <person name="Horiuchi T."/>
        </authorList>
    </citation>
    <scope>NUCLEOTIDE SEQUENCE [LARGE SCALE GENOMIC DNA]</scope>
    <source>
        <strain>K12 / W3110 / ATCC 27325 / DSM 5911</strain>
    </source>
</reference>
<reference key="2">
    <citation type="journal article" date="1997" name="Science">
        <title>The complete genome sequence of Escherichia coli K-12.</title>
        <authorList>
            <person name="Blattner F.R."/>
            <person name="Plunkett G. III"/>
            <person name="Bloch C.A."/>
            <person name="Perna N.T."/>
            <person name="Burland V."/>
            <person name="Riley M."/>
            <person name="Collado-Vides J."/>
            <person name="Glasner J.D."/>
            <person name="Rode C.K."/>
            <person name="Mayhew G.F."/>
            <person name="Gregor J."/>
            <person name="Davis N.W."/>
            <person name="Kirkpatrick H.A."/>
            <person name="Goeden M.A."/>
            <person name="Rose D.J."/>
            <person name="Mau B."/>
            <person name="Shao Y."/>
        </authorList>
    </citation>
    <scope>NUCLEOTIDE SEQUENCE [LARGE SCALE GENOMIC DNA]</scope>
    <source>
        <strain>K12 / MG1655 / ATCC 47076</strain>
    </source>
</reference>
<reference key="3">
    <citation type="journal article" date="2006" name="Mol. Syst. Biol.">
        <title>Highly accurate genome sequences of Escherichia coli K-12 strains MG1655 and W3110.</title>
        <authorList>
            <person name="Hayashi K."/>
            <person name="Morooka N."/>
            <person name="Yamamoto Y."/>
            <person name="Fujita K."/>
            <person name="Isono K."/>
            <person name="Choi S."/>
            <person name="Ohtsubo E."/>
            <person name="Baba T."/>
            <person name="Wanner B.L."/>
            <person name="Mori H."/>
            <person name="Horiuchi T."/>
        </authorList>
    </citation>
    <scope>NUCLEOTIDE SEQUENCE [LARGE SCALE GENOMIC DNA]</scope>
    <source>
        <strain>K12 / W3110 / ATCC 27325 / DSM 5911</strain>
    </source>
</reference>
<reference key="4">
    <citation type="journal article" date="2003" name="J. Bacteriol.">
        <title>A novel family of Escherichia coli toxin-antitoxin gene pairs.</title>
        <authorList>
            <person name="Brown J.M."/>
            <person name="Shaw K.J."/>
        </authorList>
    </citation>
    <scope>FUNCTION AS AN ANTITOXIN</scope>
    <source>
        <strain>K12 / MG1655 / ATCC 47076</strain>
    </source>
</reference>
<reference key="5">
    <citation type="journal article" date="2012" name="Mol. Microbiol.">
        <title>YeeU enhances the bundling of cytoskeletal polymers of MreB and FtsZ, antagonizing the CbtA (YeeV) toxicity in Escherichia coli.</title>
        <authorList>
            <person name="Masuda H."/>
            <person name="Tan Q."/>
            <person name="Awano N."/>
            <person name="Wu K.P."/>
            <person name="Inouye M."/>
        </authorList>
    </citation>
    <scope>FUNCTION AS AN ANTITOXIN</scope>
    <scope>FUNCTION IN CYTOSKELETON BUNDLING</scope>
    <scope>INTERACTION WITH MREB AND FTSZ</scope>
    <source>
        <strain>K12 / BW25113</strain>
    </source>
</reference>
<reference key="6">
    <citation type="journal article" date="2017" name="Toxins">
        <title>Interaction of type IV toxin/antitoxin systems in cryptic prophages of Escherichia coli K-12.</title>
        <authorList>
            <person name="Wen Z."/>
            <person name="Wang P."/>
            <person name="Sun C."/>
            <person name="Guo Y."/>
            <person name="Wang X."/>
        </authorList>
    </citation>
    <scope>FUNCTION AS AN ANTITOXIN</scope>
    <scope>INDUCTION</scope>
    <scope>DISRUPTION PHENOTYPE</scope>
    <source>
        <strain>K12 / BW25113</strain>
    </source>
</reference>
<reference key="7">
    <citation type="journal article" date="2010" name="Structure">
        <title>Crystal structures of Phd-Doc, HigA, and YeeU establish multiple evolutionary links between microbial growth-regulating toxin-antitoxin systems.</title>
        <authorList>
            <person name="Arbing M.A."/>
            <person name="Handelman S.K."/>
            <person name="Kuzin A.P."/>
            <person name="Verdon G."/>
            <person name="Wang C."/>
            <person name="Su M."/>
            <person name="Rothenbacher F.P."/>
            <person name="Abashidze M."/>
            <person name="Liu M."/>
            <person name="Hurley J.M."/>
            <person name="Xiao R."/>
            <person name="Acton T."/>
            <person name="Inouye M."/>
            <person name="Montelione G.T."/>
            <person name="Woychik N.A."/>
            <person name="Hunt J.F."/>
        </authorList>
    </citation>
    <scope>X-RAY CRYSTALLOGRAPHY (2.1 ANGSTROMS) IN COMPLEX WITH MAGNESIUM</scope>
    <scope>COFACTOR</scope>
    <scope>SUBUNIT</scope>
</reference>
<name>CBEA_ECOLI</name>